<geneLocation type="chloroplast"/>
<comment type="function">
    <text evidence="1">Has a central role in coupling the hydrolysis of ATP to the transfer of proteins across the thylakoid membrane.</text>
</comment>
<comment type="catalytic activity">
    <reaction evidence="1">
        <text>ATP + H2O + cellular proteinSide 1 = ADP + phosphate + cellular proteinSide 2.</text>
        <dbReference type="EC" id="7.4.2.8"/>
    </reaction>
</comment>
<comment type="subcellular location">
    <subcellularLocation>
        <location evidence="1">Plastid</location>
        <location evidence="1">Chloroplast stroma</location>
    </subcellularLocation>
    <subcellularLocation>
        <location evidence="1">Plastid</location>
        <location evidence="1">Chloroplast thylakoid membrane</location>
        <topology evidence="1">Peripheral membrane protein</topology>
    </subcellularLocation>
    <text evidence="1">A minor fraction is associated with the chloroplast thylakoid membrane.</text>
</comment>
<comment type="similarity">
    <text evidence="1">Belongs to the SecA family.</text>
</comment>
<protein>
    <recommendedName>
        <fullName evidence="1">Protein translocase subunit SecA</fullName>
        <ecNumber evidence="1">7.4.2.8</ecNumber>
    </recommendedName>
</protein>
<keyword id="KW-0067">ATP-binding</keyword>
<keyword id="KW-0150">Chloroplast</keyword>
<keyword id="KW-0472">Membrane</keyword>
<keyword id="KW-0547">Nucleotide-binding</keyword>
<keyword id="KW-0934">Plastid</keyword>
<keyword id="KW-0653">Protein transport</keyword>
<keyword id="KW-1185">Reference proteome</keyword>
<keyword id="KW-0793">Thylakoid</keyword>
<keyword id="KW-1278">Translocase</keyword>
<keyword id="KW-0811">Translocation</keyword>
<keyword id="KW-0813">Transport</keyword>
<gene>
    <name evidence="1" type="primary">secA</name>
</gene>
<reference key="1">
    <citation type="journal article" date="2003" name="DNA Res.">
        <title>Complete sequence and analysis of the plastid genome of the unicellular red alga Cyanidioschyzon merolae.</title>
        <authorList>
            <person name="Ohta N."/>
            <person name="Matsuzaki M."/>
            <person name="Misumi O."/>
            <person name="Miyagishima S.-Y."/>
            <person name="Nozaki H."/>
            <person name="Tanaka K."/>
            <person name="Shin-i T."/>
            <person name="Kohara Y."/>
            <person name="Kuroiwa T."/>
        </authorList>
    </citation>
    <scope>NUCLEOTIDE SEQUENCE [LARGE SCALE GENOMIC DNA]</scope>
    <source>
        <strain>NIES-3377 / 10D</strain>
    </source>
</reference>
<evidence type="ECO:0000255" key="1">
    <source>
        <dbReference type="HAMAP-Rule" id="MF_01382"/>
    </source>
</evidence>
<accession>Q85G35</accession>
<dbReference type="EC" id="7.4.2.8" evidence="1"/>
<dbReference type="EMBL" id="AB002583">
    <property type="protein sequence ID" value="BAC76156.1"/>
    <property type="molecule type" value="Genomic_DNA"/>
</dbReference>
<dbReference type="RefSeq" id="NP_848994.1">
    <property type="nucleotide sequence ID" value="NC_004799.1"/>
</dbReference>
<dbReference type="SMR" id="Q85G35"/>
<dbReference type="STRING" id="280699.Q85G35"/>
<dbReference type="EnsemblPlants" id="CMV071CT">
    <property type="protein sequence ID" value="CMV071CT"/>
    <property type="gene ID" value="CMV071C"/>
</dbReference>
<dbReference type="GeneID" id="845020"/>
<dbReference type="Gramene" id="CMV071CT">
    <property type="protein sequence ID" value="CMV071CT"/>
    <property type="gene ID" value="CMV071C"/>
</dbReference>
<dbReference type="KEGG" id="cme:CymeCp062"/>
<dbReference type="eggNOG" id="ENOG502QS7I">
    <property type="taxonomic scope" value="Eukaryota"/>
</dbReference>
<dbReference type="HOGENOM" id="CLU_005314_3_2_1"/>
<dbReference type="BRENDA" id="7.4.2.4">
    <property type="organism ID" value="1768"/>
</dbReference>
<dbReference type="Proteomes" id="UP000007014">
    <property type="component" value="Chloroplast"/>
</dbReference>
<dbReference type="GO" id="GO:0009570">
    <property type="term" value="C:chloroplast stroma"/>
    <property type="evidence" value="ECO:0007669"/>
    <property type="project" value="UniProtKB-SubCell"/>
</dbReference>
<dbReference type="GO" id="GO:0009535">
    <property type="term" value="C:chloroplast thylakoid membrane"/>
    <property type="evidence" value="ECO:0007669"/>
    <property type="project" value="UniProtKB-SubCell"/>
</dbReference>
<dbReference type="GO" id="GO:0005524">
    <property type="term" value="F:ATP binding"/>
    <property type="evidence" value="ECO:0007669"/>
    <property type="project" value="UniProtKB-UniRule"/>
</dbReference>
<dbReference type="GO" id="GO:0008564">
    <property type="term" value="F:protein-exporting ATPase activity"/>
    <property type="evidence" value="ECO:0007669"/>
    <property type="project" value="UniProtKB-EC"/>
</dbReference>
<dbReference type="GO" id="GO:0065002">
    <property type="term" value="P:intracellular protein transmembrane transport"/>
    <property type="evidence" value="ECO:0007669"/>
    <property type="project" value="UniProtKB-UniRule"/>
</dbReference>
<dbReference type="GO" id="GO:0017038">
    <property type="term" value="P:protein import"/>
    <property type="evidence" value="ECO:0007669"/>
    <property type="project" value="InterPro"/>
</dbReference>
<dbReference type="GO" id="GO:0006605">
    <property type="term" value="P:protein targeting"/>
    <property type="evidence" value="ECO:0007669"/>
    <property type="project" value="UniProtKB-UniRule"/>
</dbReference>
<dbReference type="CDD" id="cd17928">
    <property type="entry name" value="DEXDc_SecA"/>
    <property type="match status" value="1"/>
</dbReference>
<dbReference type="CDD" id="cd18803">
    <property type="entry name" value="SF2_C_secA"/>
    <property type="match status" value="1"/>
</dbReference>
<dbReference type="FunFam" id="3.90.1440.10:FF:000003">
    <property type="entry name" value="Preprotein translocase SecA subunit"/>
    <property type="match status" value="1"/>
</dbReference>
<dbReference type="FunFam" id="3.40.50.300:FF:000113">
    <property type="entry name" value="Preprotein translocase subunit SecA"/>
    <property type="match status" value="1"/>
</dbReference>
<dbReference type="Gene3D" id="1.10.3060.10">
    <property type="entry name" value="Helical scaffold and wing domains of SecA"/>
    <property type="match status" value="2"/>
</dbReference>
<dbReference type="Gene3D" id="3.40.50.300">
    <property type="entry name" value="P-loop containing nucleotide triphosphate hydrolases"/>
    <property type="match status" value="2"/>
</dbReference>
<dbReference type="Gene3D" id="3.90.1440.10">
    <property type="entry name" value="SecA, preprotein cross-linking domain"/>
    <property type="match status" value="1"/>
</dbReference>
<dbReference type="HAMAP" id="MF_01382">
    <property type="entry name" value="SecA"/>
    <property type="match status" value="1"/>
</dbReference>
<dbReference type="InterPro" id="IPR014001">
    <property type="entry name" value="Helicase_ATP-bd"/>
</dbReference>
<dbReference type="InterPro" id="IPR027417">
    <property type="entry name" value="P-loop_NTPase"/>
</dbReference>
<dbReference type="InterPro" id="IPR000185">
    <property type="entry name" value="SecA"/>
</dbReference>
<dbReference type="InterPro" id="IPR020937">
    <property type="entry name" value="SecA_CS"/>
</dbReference>
<dbReference type="InterPro" id="IPR011115">
    <property type="entry name" value="SecA_DEAD"/>
</dbReference>
<dbReference type="InterPro" id="IPR014018">
    <property type="entry name" value="SecA_motor_DEAD"/>
</dbReference>
<dbReference type="InterPro" id="IPR011130">
    <property type="entry name" value="SecA_preprotein_X-link_dom"/>
</dbReference>
<dbReference type="InterPro" id="IPR044722">
    <property type="entry name" value="SecA_SF2_C"/>
</dbReference>
<dbReference type="InterPro" id="IPR011116">
    <property type="entry name" value="SecA_Wing/Scaffold"/>
</dbReference>
<dbReference type="InterPro" id="IPR036266">
    <property type="entry name" value="SecA_Wing/Scaffold_sf"/>
</dbReference>
<dbReference type="InterPro" id="IPR036670">
    <property type="entry name" value="SecA_X-link_sf"/>
</dbReference>
<dbReference type="NCBIfam" id="NF009538">
    <property type="entry name" value="PRK12904.1"/>
    <property type="match status" value="1"/>
</dbReference>
<dbReference type="NCBIfam" id="TIGR00963">
    <property type="entry name" value="secA"/>
    <property type="match status" value="1"/>
</dbReference>
<dbReference type="PANTHER" id="PTHR30612:SF0">
    <property type="entry name" value="CHLOROPLAST PROTEIN-TRANSPORTING ATPASE"/>
    <property type="match status" value="1"/>
</dbReference>
<dbReference type="PANTHER" id="PTHR30612">
    <property type="entry name" value="SECA INNER MEMBRANE COMPONENT OF SEC PROTEIN SECRETION SYSTEM"/>
    <property type="match status" value="1"/>
</dbReference>
<dbReference type="Pfam" id="PF21090">
    <property type="entry name" value="P-loop_SecA"/>
    <property type="match status" value="1"/>
</dbReference>
<dbReference type="Pfam" id="PF07517">
    <property type="entry name" value="SecA_DEAD"/>
    <property type="match status" value="1"/>
</dbReference>
<dbReference type="Pfam" id="PF01043">
    <property type="entry name" value="SecA_PP_bind"/>
    <property type="match status" value="1"/>
</dbReference>
<dbReference type="Pfam" id="PF07516">
    <property type="entry name" value="SecA_SW"/>
    <property type="match status" value="2"/>
</dbReference>
<dbReference type="PRINTS" id="PR00906">
    <property type="entry name" value="SECA"/>
</dbReference>
<dbReference type="SMART" id="SM00957">
    <property type="entry name" value="SecA_DEAD"/>
    <property type="match status" value="1"/>
</dbReference>
<dbReference type="SMART" id="SM00958">
    <property type="entry name" value="SecA_PP_bind"/>
    <property type="match status" value="1"/>
</dbReference>
<dbReference type="SUPFAM" id="SSF81886">
    <property type="entry name" value="Helical scaffold and wing domains of SecA"/>
    <property type="match status" value="1"/>
</dbReference>
<dbReference type="SUPFAM" id="SSF52540">
    <property type="entry name" value="P-loop containing nucleoside triphosphate hydrolases"/>
    <property type="match status" value="2"/>
</dbReference>
<dbReference type="SUPFAM" id="SSF81767">
    <property type="entry name" value="Pre-protein crosslinking domain of SecA"/>
    <property type="match status" value="1"/>
</dbReference>
<dbReference type="PROSITE" id="PS01312">
    <property type="entry name" value="SECA"/>
    <property type="match status" value="1"/>
</dbReference>
<dbReference type="PROSITE" id="PS51196">
    <property type="entry name" value="SECA_MOTOR_DEAD"/>
    <property type="match status" value="1"/>
</dbReference>
<sequence>MKNKLRQIKENREKYRKLKEEELREKTKQLKERAKQESLEELMVEAYSNVWEGAARVLKLEAYDVQLIGAMVLNKGQIAEMKTGEGKSLVAAFASYLNALSGKGVHIVTVNDYLAKRDERWIGEVLRYLGLKTAVITNESSREERKKGYEADVTYITNSELGFDYLRDHMAWSKEEIVQREFNYCIIDEVDSILIDEARTPLIISGPTKGSEKPYKVAWEIGKRMKEGEDYELEEKSKQVILKEKGIKRCEEALEVKDIFSMETPWAHYVMNAIKAKHFYIKDVNYIIKEGEVVIVDEFTGRIMGGRRWADGLHQAIEAKEGVKIQEESETLASITYQNLFLLYPKLAGMTGTAKTEEEEFEQIYGLKVVSIPTHRKMKRKDYPDVVYRTSRSKWMAVAEECERMWTKGRPVLVGTTSIEKSELLARLLEEKGVKYKLLNARPSLAADEASIIAQAGKIGSITIATNMAGRGTDIILGGNIKEAFGEWIKERKKQVDIEEEWRKVLEGKADEESEKKYKQLKEEHEKEQKRVKQLGGLYVIGTERHESRRIDNQLRGRSGRQGDEGSSRFFISLEDDLLRIFGGGQMGEIMSRLGVEEPLESAFLSKSLDRAQKKVENYYYQMRKQLFEYDQVLNSQRKAIYKERTDILRSEEVGEWSKSYIRKEWPGGLLGIKRGMRNRSEVEISYDVKKMQMESVQAGLMNELERLLLLQQIDKSWSKHLKEMSLLREFIAWRGYAQRDPLVEYKNESYNLFIKMIEEIRQGYAYSLFRSQA</sequence>
<proteinExistence type="inferred from homology"/>
<feature type="chain" id="PRO_0000318486" description="Protein translocase subunit SecA">
    <location>
        <begin position="1"/>
        <end position="774"/>
    </location>
</feature>
<feature type="binding site" evidence="1">
    <location>
        <position position="66"/>
    </location>
    <ligand>
        <name>ATP</name>
        <dbReference type="ChEBI" id="CHEBI:30616"/>
    </ligand>
</feature>
<feature type="binding site" evidence="1">
    <location>
        <begin position="84"/>
        <end position="88"/>
    </location>
    <ligand>
        <name>ATP</name>
        <dbReference type="ChEBI" id="CHEBI:30616"/>
    </ligand>
</feature>
<feature type="binding site" evidence="1">
    <location>
        <position position="474"/>
    </location>
    <ligand>
        <name>ATP</name>
        <dbReference type="ChEBI" id="CHEBI:30616"/>
    </ligand>
</feature>
<organism>
    <name type="scientific">Cyanidioschyzon merolae (strain NIES-3377 / 10D)</name>
    <name type="common">Unicellular red alga</name>
    <dbReference type="NCBI Taxonomy" id="280699"/>
    <lineage>
        <taxon>Eukaryota</taxon>
        <taxon>Rhodophyta</taxon>
        <taxon>Bangiophyceae</taxon>
        <taxon>Cyanidiales</taxon>
        <taxon>Cyanidiaceae</taxon>
        <taxon>Cyanidioschyzon</taxon>
    </lineage>
</organism>
<name>SECA_CYAM1</name>